<evidence type="ECO:0000255" key="1">
    <source>
        <dbReference type="HAMAP-Rule" id="MF_00268"/>
    </source>
</evidence>
<evidence type="ECO:0000256" key="2">
    <source>
        <dbReference type="SAM" id="MobiDB-lite"/>
    </source>
</evidence>
<sequence>MDDNKKKALAAALGQIERQFGKGAVMRMGDHDRQAIPAISTGSLGLDIALGIGGLPKGRIVEIYGPESSGKTTLTLSVIAQAQKAGATCAFVDAEHALDPEYAGKLGVNVDDLLVSQPDTGEQALEITDMLVRSNAVDVIIVDSVAALVPKAEIEGEMGDMHVGLQARLMSQALRKITGNIKNANCLVIFINQIRMKIGVMFGSPETTTGGNALKFYASVRLDIRRTGAVKEGDEVVGSETRVKIVKNKVAPPFRQAEFQILYGKGIYLNGEIIDLGVLHGFLEKSGAWYSYQGNKIGQGKANSAKFLQDNPEIGNALEKQIREKLLTASPDVKANPVKETEDDMADADI</sequence>
<proteinExistence type="inferred from homology"/>
<organism>
    <name type="scientific">Pseudomonas fluorescens (strain ATCC BAA-477 / NRRL B-23932 / Pf-5)</name>
    <dbReference type="NCBI Taxonomy" id="220664"/>
    <lineage>
        <taxon>Bacteria</taxon>
        <taxon>Pseudomonadati</taxon>
        <taxon>Pseudomonadota</taxon>
        <taxon>Gammaproteobacteria</taxon>
        <taxon>Pseudomonadales</taxon>
        <taxon>Pseudomonadaceae</taxon>
        <taxon>Pseudomonas</taxon>
    </lineage>
</organism>
<keyword id="KW-0067">ATP-binding</keyword>
<keyword id="KW-0963">Cytoplasm</keyword>
<keyword id="KW-0227">DNA damage</keyword>
<keyword id="KW-0233">DNA recombination</keyword>
<keyword id="KW-0234">DNA repair</keyword>
<keyword id="KW-0238">DNA-binding</keyword>
<keyword id="KW-0547">Nucleotide-binding</keyword>
<keyword id="KW-0742">SOS response</keyword>
<name>RECA_PSEF5</name>
<feature type="chain" id="PRO_0000122803" description="Protein RecA">
    <location>
        <begin position="1"/>
        <end position="350"/>
    </location>
</feature>
<feature type="region of interest" description="Disordered" evidence="2">
    <location>
        <begin position="329"/>
        <end position="350"/>
    </location>
</feature>
<feature type="compositionally biased region" description="Acidic residues" evidence="2">
    <location>
        <begin position="341"/>
        <end position="350"/>
    </location>
</feature>
<feature type="binding site" evidence="1">
    <location>
        <begin position="65"/>
        <end position="72"/>
    </location>
    <ligand>
        <name>ATP</name>
        <dbReference type="ChEBI" id="CHEBI:30616"/>
    </ligand>
</feature>
<protein>
    <recommendedName>
        <fullName evidence="1">Protein RecA</fullName>
    </recommendedName>
    <alternativeName>
        <fullName evidence="1">Recombinase A</fullName>
    </alternativeName>
</protein>
<dbReference type="EMBL" id="CP000076">
    <property type="protein sequence ID" value="AAY90518.1"/>
    <property type="molecule type" value="Genomic_DNA"/>
</dbReference>
<dbReference type="RefSeq" id="WP_011059579.1">
    <property type="nucleotide sequence ID" value="NC_004129.6"/>
</dbReference>
<dbReference type="SMR" id="Q4KHC1"/>
<dbReference type="STRING" id="220664.PFL_1231"/>
<dbReference type="GeneID" id="57474251"/>
<dbReference type="KEGG" id="pfl:PFL_1231"/>
<dbReference type="eggNOG" id="COG0468">
    <property type="taxonomic scope" value="Bacteria"/>
</dbReference>
<dbReference type="HOGENOM" id="CLU_040469_3_2_6"/>
<dbReference type="Proteomes" id="UP000008540">
    <property type="component" value="Chromosome"/>
</dbReference>
<dbReference type="GO" id="GO:0005829">
    <property type="term" value="C:cytosol"/>
    <property type="evidence" value="ECO:0007669"/>
    <property type="project" value="TreeGrafter"/>
</dbReference>
<dbReference type="GO" id="GO:0005524">
    <property type="term" value="F:ATP binding"/>
    <property type="evidence" value="ECO:0007669"/>
    <property type="project" value="UniProtKB-UniRule"/>
</dbReference>
<dbReference type="GO" id="GO:0016887">
    <property type="term" value="F:ATP hydrolysis activity"/>
    <property type="evidence" value="ECO:0007669"/>
    <property type="project" value="InterPro"/>
</dbReference>
<dbReference type="GO" id="GO:0140664">
    <property type="term" value="F:ATP-dependent DNA damage sensor activity"/>
    <property type="evidence" value="ECO:0007669"/>
    <property type="project" value="InterPro"/>
</dbReference>
<dbReference type="GO" id="GO:0003684">
    <property type="term" value="F:damaged DNA binding"/>
    <property type="evidence" value="ECO:0007669"/>
    <property type="project" value="UniProtKB-UniRule"/>
</dbReference>
<dbReference type="GO" id="GO:0003697">
    <property type="term" value="F:single-stranded DNA binding"/>
    <property type="evidence" value="ECO:0007669"/>
    <property type="project" value="UniProtKB-UniRule"/>
</dbReference>
<dbReference type="GO" id="GO:0006310">
    <property type="term" value="P:DNA recombination"/>
    <property type="evidence" value="ECO:0007669"/>
    <property type="project" value="UniProtKB-UniRule"/>
</dbReference>
<dbReference type="GO" id="GO:0006281">
    <property type="term" value="P:DNA repair"/>
    <property type="evidence" value="ECO:0007669"/>
    <property type="project" value="UniProtKB-UniRule"/>
</dbReference>
<dbReference type="GO" id="GO:0009432">
    <property type="term" value="P:SOS response"/>
    <property type="evidence" value="ECO:0007669"/>
    <property type="project" value="UniProtKB-UniRule"/>
</dbReference>
<dbReference type="CDD" id="cd00983">
    <property type="entry name" value="RecA"/>
    <property type="match status" value="1"/>
</dbReference>
<dbReference type="FunFam" id="3.40.50.300:FF:000087">
    <property type="entry name" value="Recombinase RecA"/>
    <property type="match status" value="1"/>
</dbReference>
<dbReference type="Gene3D" id="3.40.50.300">
    <property type="entry name" value="P-loop containing nucleotide triphosphate hydrolases"/>
    <property type="match status" value="1"/>
</dbReference>
<dbReference type="HAMAP" id="MF_00268">
    <property type="entry name" value="RecA"/>
    <property type="match status" value="1"/>
</dbReference>
<dbReference type="InterPro" id="IPR003593">
    <property type="entry name" value="AAA+_ATPase"/>
</dbReference>
<dbReference type="InterPro" id="IPR013765">
    <property type="entry name" value="DNA_recomb/repair_RecA"/>
</dbReference>
<dbReference type="InterPro" id="IPR020584">
    <property type="entry name" value="DNA_recomb/repair_RecA_CS"/>
</dbReference>
<dbReference type="InterPro" id="IPR027417">
    <property type="entry name" value="P-loop_NTPase"/>
</dbReference>
<dbReference type="InterPro" id="IPR049261">
    <property type="entry name" value="RecA-like_C"/>
</dbReference>
<dbReference type="InterPro" id="IPR049428">
    <property type="entry name" value="RecA-like_N"/>
</dbReference>
<dbReference type="InterPro" id="IPR020588">
    <property type="entry name" value="RecA_ATP-bd"/>
</dbReference>
<dbReference type="InterPro" id="IPR023400">
    <property type="entry name" value="RecA_C_sf"/>
</dbReference>
<dbReference type="InterPro" id="IPR020587">
    <property type="entry name" value="RecA_monomer-monomer_interface"/>
</dbReference>
<dbReference type="NCBIfam" id="TIGR02012">
    <property type="entry name" value="tigrfam_recA"/>
    <property type="match status" value="1"/>
</dbReference>
<dbReference type="PANTHER" id="PTHR45900:SF1">
    <property type="entry name" value="MITOCHONDRIAL DNA REPAIR PROTEIN RECA HOMOLOG-RELATED"/>
    <property type="match status" value="1"/>
</dbReference>
<dbReference type="PANTHER" id="PTHR45900">
    <property type="entry name" value="RECA"/>
    <property type="match status" value="1"/>
</dbReference>
<dbReference type="Pfam" id="PF00154">
    <property type="entry name" value="RecA"/>
    <property type="match status" value="1"/>
</dbReference>
<dbReference type="Pfam" id="PF21096">
    <property type="entry name" value="RecA_C"/>
    <property type="match status" value="1"/>
</dbReference>
<dbReference type="PRINTS" id="PR00142">
    <property type="entry name" value="RECA"/>
</dbReference>
<dbReference type="SMART" id="SM00382">
    <property type="entry name" value="AAA"/>
    <property type="match status" value="1"/>
</dbReference>
<dbReference type="SUPFAM" id="SSF52540">
    <property type="entry name" value="P-loop containing nucleoside triphosphate hydrolases"/>
    <property type="match status" value="1"/>
</dbReference>
<dbReference type="SUPFAM" id="SSF54752">
    <property type="entry name" value="RecA protein, C-terminal domain"/>
    <property type="match status" value="1"/>
</dbReference>
<dbReference type="PROSITE" id="PS00321">
    <property type="entry name" value="RECA_1"/>
    <property type="match status" value="1"/>
</dbReference>
<dbReference type="PROSITE" id="PS50162">
    <property type="entry name" value="RECA_2"/>
    <property type="match status" value="1"/>
</dbReference>
<dbReference type="PROSITE" id="PS50163">
    <property type="entry name" value="RECA_3"/>
    <property type="match status" value="1"/>
</dbReference>
<comment type="function">
    <text evidence="1">Can catalyze the hydrolysis of ATP in the presence of single-stranded DNA, the ATP-dependent uptake of single-stranded DNA by duplex DNA, and the ATP-dependent hybridization of homologous single-stranded DNAs. It interacts with LexA causing its activation and leading to its autocatalytic cleavage.</text>
</comment>
<comment type="subcellular location">
    <subcellularLocation>
        <location evidence="1">Cytoplasm</location>
    </subcellularLocation>
</comment>
<comment type="similarity">
    <text evidence="1">Belongs to the RecA family.</text>
</comment>
<accession>Q4KHC1</accession>
<gene>
    <name evidence="1" type="primary">recA</name>
    <name type="ordered locus">PFL_1231</name>
</gene>
<reference key="1">
    <citation type="journal article" date="2005" name="Nat. Biotechnol.">
        <title>Complete genome sequence of the plant commensal Pseudomonas fluorescens Pf-5.</title>
        <authorList>
            <person name="Paulsen I.T."/>
            <person name="Press C.M."/>
            <person name="Ravel J."/>
            <person name="Kobayashi D.Y."/>
            <person name="Myers G.S.A."/>
            <person name="Mavrodi D.V."/>
            <person name="DeBoy R.T."/>
            <person name="Seshadri R."/>
            <person name="Ren Q."/>
            <person name="Madupu R."/>
            <person name="Dodson R.J."/>
            <person name="Durkin A.S."/>
            <person name="Brinkac L.M."/>
            <person name="Daugherty S.C."/>
            <person name="Sullivan S.A."/>
            <person name="Rosovitz M.J."/>
            <person name="Gwinn M.L."/>
            <person name="Zhou L."/>
            <person name="Schneider D.J."/>
            <person name="Cartinhour S.W."/>
            <person name="Nelson W.C."/>
            <person name="Weidman J."/>
            <person name="Watkins K."/>
            <person name="Tran K."/>
            <person name="Khouri H."/>
            <person name="Pierson E.A."/>
            <person name="Pierson L.S. III"/>
            <person name="Thomashow L.S."/>
            <person name="Loper J.E."/>
        </authorList>
    </citation>
    <scope>NUCLEOTIDE SEQUENCE [LARGE SCALE GENOMIC DNA]</scope>
    <source>
        <strain>ATCC BAA-477 / NRRL B-23932 / Pf-5</strain>
    </source>
</reference>